<protein>
    <recommendedName>
        <fullName evidence="1">Small ribosomal subunit protein bS16</fullName>
    </recommendedName>
    <alternativeName>
        <fullName evidence="2">30S ribosomal protein S16</fullName>
    </alternativeName>
</protein>
<comment type="similarity">
    <text evidence="1">Belongs to the bacterial ribosomal protein bS16 family.</text>
</comment>
<sequence length="89" mass="9845">MVVIRLARGGAKKRPFYQVVVADQRRARDGRYIENIGFFNPLAKDSEEAVRLNMEAYNAWVAKGAQPSDRVASLAKAYNKSAAQTEATA</sequence>
<name>RS16_PSYA2</name>
<accession>Q4FQ42</accession>
<keyword id="KW-1185">Reference proteome</keyword>
<keyword id="KW-0687">Ribonucleoprotein</keyword>
<keyword id="KW-0689">Ribosomal protein</keyword>
<evidence type="ECO:0000255" key="1">
    <source>
        <dbReference type="HAMAP-Rule" id="MF_00385"/>
    </source>
</evidence>
<evidence type="ECO:0000305" key="2"/>
<gene>
    <name evidence="1" type="primary">rpsP</name>
    <name type="ordered locus">Psyc_2019</name>
</gene>
<feature type="chain" id="PRO_0000243853" description="Small ribosomal subunit protein bS16">
    <location>
        <begin position="1"/>
        <end position="89"/>
    </location>
</feature>
<organism>
    <name type="scientific">Psychrobacter arcticus (strain DSM 17307 / VKM B-2377 / 273-4)</name>
    <dbReference type="NCBI Taxonomy" id="259536"/>
    <lineage>
        <taxon>Bacteria</taxon>
        <taxon>Pseudomonadati</taxon>
        <taxon>Pseudomonadota</taxon>
        <taxon>Gammaproteobacteria</taxon>
        <taxon>Moraxellales</taxon>
        <taxon>Moraxellaceae</taxon>
        <taxon>Psychrobacter</taxon>
    </lineage>
</organism>
<dbReference type="EMBL" id="CP000082">
    <property type="protein sequence ID" value="AAZ19866.1"/>
    <property type="molecule type" value="Genomic_DNA"/>
</dbReference>
<dbReference type="RefSeq" id="WP_011281274.1">
    <property type="nucleotide sequence ID" value="NC_007204.1"/>
</dbReference>
<dbReference type="SMR" id="Q4FQ42"/>
<dbReference type="STRING" id="259536.Psyc_2019"/>
<dbReference type="KEGG" id="par:Psyc_2019"/>
<dbReference type="eggNOG" id="COG0228">
    <property type="taxonomic scope" value="Bacteria"/>
</dbReference>
<dbReference type="HOGENOM" id="CLU_100590_5_1_6"/>
<dbReference type="OrthoDB" id="9807878at2"/>
<dbReference type="Proteomes" id="UP000000546">
    <property type="component" value="Chromosome"/>
</dbReference>
<dbReference type="GO" id="GO:0005737">
    <property type="term" value="C:cytoplasm"/>
    <property type="evidence" value="ECO:0007669"/>
    <property type="project" value="UniProtKB-ARBA"/>
</dbReference>
<dbReference type="GO" id="GO:0015935">
    <property type="term" value="C:small ribosomal subunit"/>
    <property type="evidence" value="ECO:0007669"/>
    <property type="project" value="TreeGrafter"/>
</dbReference>
<dbReference type="GO" id="GO:0003735">
    <property type="term" value="F:structural constituent of ribosome"/>
    <property type="evidence" value="ECO:0007669"/>
    <property type="project" value="InterPro"/>
</dbReference>
<dbReference type="GO" id="GO:0006412">
    <property type="term" value="P:translation"/>
    <property type="evidence" value="ECO:0007669"/>
    <property type="project" value="UniProtKB-UniRule"/>
</dbReference>
<dbReference type="Gene3D" id="3.30.1320.10">
    <property type="match status" value="1"/>
</dbReference>
<dbReference type="HAMAP" id="MF_00385">
    <property type="entry name" value="Ribosomal_bS16"/>
    <property type="match status" value="1"/>
</dbReference>
<dbReference type="InterPro" id="IPR000307">
    <property type="entry name" value="Ribosomal_bS16"/>
</dbReference>
<dbReference type="InterPro" id="IPR020592">
    <property type="entry name" value="Ribosomal_bS16_CS"/>
</dbReference>
<dbReference type="InterPro" id="IPR023803">
    <property type="entry name" value="Ribosomal_bS16_dom_sf"/>
</dbReference>
<dbReference type="NCBIfam" id="TIGR00002">
    <property type="entry name" value="S16"/>
    <property type="match status" value="1"/>
</dbReference>
<dbReference type="PANTHER" id="PTHR12919">
    <property type="entry name" value="30S RIBOSOMAL PROTEIN S16"/>
    <property type="match status" value="1"/>
</dbReference>
<dbReference type="PANTHER" id="PTHR12919:SF20">
    <property type="entry name" value="SMALL RIBOSOMAL SUBUNIT PROTEIN BS16M"/>
    <property type="match status" value="1"/>
</dbReference>
<dbReference type="Pfam" id="PF00886">
    <property type="entry name" value="Ribosomal_S16"/>
    <property type="match status" value="1"/>
</dbReference>
<dbReference type="SUPFAM" id="SSF54565">
    <property type="entry name" value="Ribosomal protein S16"/>
    <property type="match status" value="1"/>
</dbReference>
<dbReference type="PROSITE" id="PS00732">
    <property type="entry name" value="RIBOSOMAL_S16"/>
    <property type="match status" value="1"/>
</dbReference>
<proteinExistence type="inferred from homology"/>
<reference key="1">
    <citation type="journal article" date="2010" name="Appl. Environ. Microbiol.">
        <title>The genome sequence of Psychrobacter arcticus 273-4, a psychroactive Siberian permafrost bacterium, reveals mechanisms for adaptation to low-temperature growth.</title>
        <authorList>
            <person name="Ayala-del-Rio H.L."/>
            <person name="Chain P.S."/>
            <person name="Grzymski J.J."/>
            <person name="Ponder M.A."/>
            <person name="Ivanova N."/>
            <person name="Bergholz P.W."/>
            <person name="Di Bartolo G."/>
            <person name="Hauser L."/>
            <person name="Land M."/>
            <person name="Bakermans C."/>
            <person name="Rodrigues D."/>
            <person name="Klappenbach J."/>
            <person name="Zarka D."/>
            <person name="Larimer F."/>
            <person name="Richardson P."/>
            <person name="Murray A."/>
            <person name="Thomashow M."/>
            <person name="Tiedje J.M."/>
        </authorList>
    </citation>
    <scope>NUCLEOTIDE SEQUENCE [LARGE SCALE GENOMIC DNA]</scope>
    <source>
        <strain>DSM 17307 / VKM B-2377 / 273-4</strain>
    </source>
</reference>